<evidence type="ECO:0000250" key="1">
    <source>
        <dbReference type="UniProtKB" id="P13693"/>
    </source>
</evidence>
<evidence type="ECO:0000250" key="2">
    <source>
        <dbReference type="UniProtKB" id="Q9VGS2"/>
    </source>
</evidence>
<evidence type="ECO:0000255" key="3">
    <source>
        <dbReference type="PROSITE-ProRule" id="PRU01133"/>
    </source>
</evidence>
<evidence type="ECO:0000305" key="4"/>
<evidence type="ECO:0000312" key="5">
    <source>
        <dbReference type="EMBL" id="AAR09822.1"/>
    </source>
</evidence>
<comment type="function">
    <text evidence="1">Involved in calcium binding and microtubule stabilization.</text>
</comment>
<comment type="subcellular location">
    <subcellularLocation>
        <location evidence="1">Cytoplasm</location>
    </subcellularLocation>
</comment>
<comment type="similarity">
    <text evidence="3">Belongs to the TCTP family.</text>
</comment>
<keyword id="KW-0106">Calcium</keyword>
<keyword id="KW-0963">Cytoplasm</keyword>
<reference evidence="5" key="1">
    <citation type="journal article" date="2003" name="Genome Res.">
        <title>An evolutionary analysis of orphan genes in Drosophila.</title>
        <authorList>
            <person name="Domazet-Loso T."/>
            <person name="Tautz D."/>
        </authorList>
    </citation>
    <scope>NUCLEOTIDE SEQUENCE [MRNA]</scope>
</reference>
<name>TCTP_DROYA</name>
<gene>
    <name evidence="2" type="primary">Tctp</name>
    <name type="ORF">GE26077</name>
</gene>
<dbReference type="EMBL" id="AY231799">
    <property type="protein sequence ID" value="AAR09822.1"/>
    <property type="molecule type" value="mRNA"/>
</dbReference>
<dbReference type="EMBL" id="AY232052">
    <property type="protein sequence ID" value="AAR10075.1"/>
    <property type="molecule type" value="mRNA"/>
</dbReference>
<dbReference type="SMR" id="Q6XIN1"/>
<dbReference type="eggNOG" id="KOG1727">
    <property type="taxonomic scope" value="Eukaryota"/>
</dbReference>
<dbReference type="OrthoDB" id="10248936at2759"/>
<dbReference type="ChiTaRS" id="Tctp">
    <property type="organism name" value="fly"/>
</dbReference>
<dbReference type="GO" id="GO:0005881">
    <property type="term" value="C:cytoplasmic microtubule"/>
    <property type="evidence" value="ECO:0000250"/>
    <property type="project" value="UniProtKB"/>
</dbReference>
<dbReference type="GO" id="GO:0005634">
    <property type="term" value="C:nucleus"/>
    <property type="evidence" value="ECO:0007669"/>
    <property type="project" value="EnsemblMetazoa"/>
</dbReference>
<dbReference type="GO" id="GO:0005700">
    <property type="term" value="C:polytene chromosome"/>
    <property type="evidence" value="ECO:0007669"/>
    <property type="project" value="EnsemblMetazoa"/>
</dbReference>
<dbReference type="GO" id="GO:0005509">
    <property type="term" value="F:calcium ion binding"/>
    <property type="evidence" value="ECO:0000250"/>
    <property type="project" value="UniProtKB"/>
</dbReference>
<dbReference type="GO" id="GO:0005085">
    <property type="term" value="F:guanyl-nucleotide exchange factor activity"/>
    <property type="evidence" value="ECO:0007669"/>
    <property type="project" value="EnsemblMetazoa"/>
</dbReference>
<dbReference type="GO" id="GO:0030295">
    <property type="term" value="F:protein kinase activator activity"/>
    <property type="evidence" value="ECO:0007669"/>
    <property type="project" value="EnsemblMetazoa"/>
</dbReference>
<dbReference type="GO" id="GO:0071480">
    <property type="term" value="P:cellular response to gamma radiation"/>
    <property type="evidence" value="ECO:0007669"/>
    <property type="project" value="EnsemblMetazoa"/>
</dbReference>
<dbReference type="GO" id="GO:0006302">
    <property type="term" value="P:double-strand break repair"/>
    <property type="evidence" value="ECO:0007669"/>
    <property type="project" value="EnsemblMetazoa"/>
</dbReference>
<dbReference type="GO" id="GO:0007095">
    <property type="term" value="P:mitotic G2 DNA damage checkpoint signaling"/>
    <property type="evidence" value="ECO:0007669"/>
    <property type="project" value="EnsemblMetazoa"/>
</dbReference>
<dbReference type="GO" id="GO:0031573">
    <property type="term" value="P:mitotic intra-S DNA damage checkpoint signaling"/>
    <property type="evidence" value="ECO:0007669"/>
    <property type="project" value="EnsemblMetazoa"/>
</dbReference>
<dbReference type="GO" id="GO:0045793">
    <property type="term" value="P:positive regulation of cell size"/>
    <property type="evidence" value="ECO:0007669"/>
    <property type="project" value="EnsemblMetazoa"/>
</dbReference>
<dbReference type="GO" id="GO:0040018">
    <property type="term" value="P:positive regulation of multicellular organism growth"/>
    <property type="evidence" value="ECO:0007669"/>
    <property type="project" value="EnsemblMetazoa"/>
</dbReference>
<dbReference type="GO" id="GO:2000736">
    <property type="term" value="P:regulation of stem cell differentiation"/>
    <property type="evidence" value="ECO:0007669"/>
    <property type="project" value="EnsemblMetazoa"/>
</dbReference>
<dbReference type="FunFam" id="2.170.150.10:FF:000002">
    <property type="entry name" value="Translationally-controlled tumor protein homolog"/>
    <property type="match status" value="1"/>
</dbReference>
<dbReference type="Gene3D" id="2.170.150.10">
    <property type="entry name" value="Metal Binding Protein, Guanine Nucleotide Exchange Factor, Chain A"/>
    <property type="match status" value="1"/>
</dbReference>
<dbReference type="InterPro" id="IPR011057">
    <property type="entry name" value="Mss4-like_sf"/>
</dbReference>
<dbReference type="InterPro" id="IPR011323">
    <property type="entry name" value="Mss4/transl-control_tumour"/>
</dbReference>
<dbReference type="InterPro" id="IPR034737">
    <property type="entry name" value="TCTP"/>
</dbReference>
<dbReference type="InterPro" id="IPR018103">
    <property type="entry name" value="Translation_control_tumour_CS"/>
</dbReference>
<dbReference type="InterPro" id="IPR018105">
    <property type="entry name" value="Translational_control_tumour_p"/>
</dbReference>
<dbReference type="PANTHER" id="PTHR11991">
    <property type="entry name" value="TRANSLATIONALLY CONTROLLED TUMOR PROTEIN-RELATED"/>
    <property type="match status" value="1"/>
</dbReference>
<dbReference type="PANTHER" id="PTHR11991:SF0">
    <property type="entry name" value="TRANSLATIONALLY-CONTROLLED TUMOR PROTEIN"/>
    <property type="match status" value="1"/>
</dbReference>
<dbReference type="Pfam" id="PF00838">
    <property type="entry name" value="TCTP"/>
    <property type="match status" value="1"/>
</dbReference>
<dbReference type="PRINTS" id="PR01653">
    <property type="entry name" value="TCTPROTEIN"/>
</dbReference>
<dbReference type="SUPFAM" id="SSF51316">
    <property type="entry name" value="Mss4-like"/>
    <property type="match status" value="1"/>
</dbReference>
<dbReference type="PROSITE" id="PS01002">
    <property type="entry name" value="TCTP_1"/>
    <property type="match status" value="1"/>
</dbReference>
<dbReference type="PROSITE" id="PS01003">
    <property type="entry name" value="TCTP_2"/>
    <property type="match status" value="1"/>
</dbReference>
<dbReference type="PROSITE" id="PS51797">
    <property type="entry name" value="TCTP_3"/>
    <property type="match status" value="1"/>
</dbReference>
<proteinExistence type="evidence at transcript level"/>
<accession>Q6XIN1</accession>
<accession>Q6XHY0</accession>
<feature type="chain" id="PRO_0000232400" description="Translationally-controlled tumor protein homolog">
    <location>
        <begin position="1"/>
        <end position="172"/>
    </location>
</feature>
<feature type="domain" description="TCTP" evidence="3">
    <location>
        <begin position="1"/>
        <end position="172"/>
    </location>
</feature>
<feature type="sequence conflict" description="In Ref. 1; AAR10075." evidence="4" ref="1">
    <original>V</original>
    <variation>R</variation>
    <location>
        <position position="147"/>
    </location>
</feature>
<organism>
    <name type="scientific">Drosophila yakuba</name>
    <name type="common">Fruit fly</name>
    <dbReference type="NCBI Taxonomy" id="7245"/>
    <lineage>
        <taxon>Eukaryota</taxon>
        <taxon>Metazoa</taxon>
        <taxon>Ecdysozoa</taxon>
        <taxon>Arthropoda</taxon>
        <taxon>Hexapoda</taxon>
        <taxon>Insecta</taxon>
        <taxon>Pterygota</taxon>
        <taxon>Neoptera</taxon>
        <taxon>Endopterygota</taxon>
        <taxon>Diptera</taxon>
        <taxon>Brachycera</taxon>
        <taxon>Muscomorpha</taxon>
        <taxon>Ephydroidea</taxon>
        <taxon>Drosophilidae</taxon>
        <taxon>Drosophila</taxon>
        <taxon>Sophophora</taxon>
    </lineage>
</organism>
<sequence>MKIYKDIITGDEMFADTYKMKLVDEVIYEVYGKLITRQGDDIKLEGANASAEEADEGTDITSESGVDVVLNHRLQECFAFGDKKSYTLYLKDYMKKVLAKLEEKSPDQVDVFKTNMNKAMKDILGRFKELQFFTGESMDCDGMVALVEYREINGDSVPVLMFFKHGLDEEKC</sequence>
<protein>
    <recommendedName>
        <fullName>Translationally-controlled tumor protein homolog</fullName>
        <shortName>TCTP</shortName>
    </recommendedName>
</protein>